<proteinExistence type="inferred from homology"/>
<evidence type="ECO:0000255" key="1">
    <source>
        <dbReference type="HAMAP-Rule" id="MF_01227"/>
    </source>
</evidence>
<name>PYRG_MYCPU</name>
<comment type="function">
    <text evidence="1">Catalyzes the ATP-dependent amination of UTP to CTP with either L-glutamine or ammonia as the source of nitrogen. Regulates intracellular CTP levels through interactions with the four ribonucleotide triphosphates.</text>
</comment>
<comment type="catalytic activity">
    <reaction evidence="1">
        <text>UTP + L-glutamine + ATP + H2O = CTP + L-glutamate + ADP + phosphate + 2 H(+)</text>
        <dbReference type="Rhea" id="RHEA:26426"/>
        <dbReference type="ChEBI" id="CHEBI:15377"/>
        <dbReference type="ChEBI" id="CHEBI:15378"/>
        <dbReference type="ChEBI" id="CHEBI:29985"/>
        <dbReference type="ChEBI" id="CHEBI:30616"/>
        <dbReference type="ChEBI" id="CHEBI:37563"/>
        <dbReference type="ChEBI" id="CHEBI:43474"/>
        <dbReference type="ChEBI" id="CHEBI:46398"/>
        <dbReference type="ChEBI" id="CHEBI:58359"/>
        <dbReference type="ChEBI" id="CHEBI:456216"/>
        <dbReference type="EC" id="6.3.4.2"/>
    </reaction>
</comment>
<comment type="catalytic activity">
    <reaction evidence="1">
        <text>L-glutamine + H2O = L-glutamate + NH4(+)</text>
        <dbReference type="Rhea" id="RHEA:15889"/>
        <dbReference type="ChEBI" id="CHEBI:15377"/>
        <dbReference type="ChEBI" id="CHEBI:28938"/>
        <dbReference type="ChEBI" id="CHEBI:29985"/>
        <dbReference type="ChEBI" id="CHEBI:58359"/>
    </reaction>
</comment>
<comment type="catalytic activity">
    <reaction evidence="1">
        <text>UTP + NH4(+) + ATP = CTP + ADP + phosphate + 2 H(+)</text>
        <dbReference type="Rhea" id="RHEA:16597"/>
        <dbReference type="ChEBI" id="CHEBI:15378"/>
        <dbReference type="ChEBI" id="CHEBI:28938"/>
        <dbReference type="ChEBI" id="CHEBI:30616"/>
        <dbReference type="ChEBI" id="CHEBI:37563"/>
        <dbReference type="ChEBI" id="CHEBI:43474"/>
        <dbReference type="ChEBI" id="CHEBI:46398"/>
        <dbReference type="ChEBI" id="CHEBI:456216"/>
    </reaction>
</comment>
<comment type="activity regulation">
    <text evidence="1">Allosterically activated by GTP, when glutamine is the substrate; GTP has no effect on the reaction when ammonia is the substrate. The allosteric effector GTP functions by stabilizing the protein conformation that binds the tetrahedral intermediate(s) formed during glutamine hydrolysis. Inhibited by the product CTP, via allosteric rather than competitive inhibition.</text>
</comment>
<comment type="pathway">
    <text evidence="1">Pyrimidine metabolism; CTP biosynthesis via de novo pathway; CTP from UDP: step 2/2.</text>
</comment>
<comment type="subunit">
    <text evidence="1">Homotetramer.</text>
</comment>
<comment type="miscellaneous">
    <text evidence="1">CTPSs have evolved a hybrid strategy for distinguishing between UTP and CTP. The overlapping regions of the product feedback inhibitory and substrate sites recognize a common feature in both compounds, the triphosphate moiety. To differentiate isosteric substrate and product pyrimidine rings, an additional pocket far from the expected kinase/ligase catalytic site, specifically recognizes the cytosine and ribose portions of the product inhibitor.</text>
</comment>
<comment type="similarity">
    <text evidence="1">Belongs to the CTP synthase family.</text>
</comment>
<protein>
    <recommendedName>
        <fullName evidence="1">CTP synthase</fullName>
        <ecNumber evidence="1">6.3.4.2</ecNumber>
    </recommendedName>
    <alternativeName>
        <fullName evidence="1">Cytidine 5'-triphosphate synthase</fullName>
    </alternativeName>
    <alternativeName>
        <fullName evidence="1">Cytidine triphosphate synthetase</fullName>
        <shortName evidence="1">CTP synthetase</shortName>
        <shortName evidence="1">CTPS</shortName>
    </alternativeName>
    <alternativeName>
        <fullName evidence="1">UTP--ammonia ligase</fullName>
    </alternativeName>
</protein>
<gene>
    <name evidence="1" type="primary">pyrG</name>
    <name type="ordered locus">MYPU_6660</name>
</gene>
<dbReference type="EC" id="6.3.4.2" evidence="1"/>
<dbReference type="EMBL" id="AL445565">
    <property type="protein sequence ID" value="CAC13839.1"/>
    <property type="molecule type" value="Genomic_DNA"/>
</dbReference>
<dbReference type="PIR" id="B90595">
    <property type="entry name" value="B90595"/>
</dbReference>
<dbReference type="SMR" id="Q98PQ3"/>
<dbReference type="STRING" id="272635.gene:17577274"/>
<dbReference type="KEGG" id="mpu:MYPU_6660"/>
<dbReference type="eggNOG" id="COG0504">
    <property type="taxonomic scope" value="Bacteria"/>
</dbReference>
<dbReference type="HOGENOM" id="CLU_011675_5_0_14"/>
<dbReference type="UniPathway" id="UPA00159">
    <property type="reaction ID" value="UER00277"/>
</dbReference>
<dbReference type="Proteomes" id="UP000000528">
    <property type="component" value="Chromosome"/>
</dbReference>
<dbReference type="GO" id="GO:0005524">
    <property type="term" value="F:ATP binding"/>
    <property type="evidence" value="ECO:0007669"/>
    <property type="project" value="UniProtKB-KW"/>
</dbReference>
<dbReference type="GO" id="GO:0003883">
    <property type="term" value="F:CTP synthase activity"/>
    <property type="evidence" value="ECO:0007669"/>
    <property type="project" value="UniProtKB-UniRule"/>
</dbReference>
<dbReference type="GO" id="GO:0004359">
    <property type="term" value="F:glutaminase activity"/>
    <property type="evidence" value="ECO:0007669"/>
    <property type="project" value="RHEA"/>
</dbReference>
<dbReference type="GO" id="GO:0042802">
    <property type="term" value="F:identical protein binding"/>
    <property type="evidence" value="ECO:0007669"/>
    <property type="project" value="TreeGrafter"/>
</dbReference>
<dbReference type="GO" id="GO:0046872">
    <property type="term" value="F:metal ion binding"/>
    <property type="evidence" value="ECO:0007669"/>
    <property type="project" value="UniProtKB-KW"/>
</dbReference>
<dbReference type="GO" id="GO:0044210">
    <property type="term" value="P:'de novo' CTP biosynthetic process"/>
    <property type="evidence" value="ECO:0007669"/>
    <property type="project" value="UniProtKB-UniRule"/>
</dbReference>
<dbReference type="GO" id="GO:0019856">
    <property type="term" value="P:pyrimidine nucleobase biosynthetic process"/>
    <property type="evidence" value="ECO:0007669"/>
    <property type="project" value="TreeGrafter"/>
</dbReference>
<dbReference type="CDD" id="cd03113">
    <property type="entry name" value="CTPS_N"/>
    <property type="match status" value="1"/>
</dbReference>
<dbReference type="CDD" id="cd01746">
    <property type="entry name" value="GATase1_CTP_Synthase"/>
    <property type="match status" value="1"/>
</dbReference>
<dbReference type="FunFam" id="3.40.50.300:FF:000009">
    <property type="entry name" value="CTP synthase"/>
    <property type="match status" value="1"/>
</dbReference>
<dbReference type="Gene3D" id="3.40.50.880">
    <property type="match status" value="1"/>
</dbReference>
<dbReference type="Gene3D" id="3.40.50.300">
    <property type="entry name" value="P-loop containing nucleotide triphosphate hydrolases"/>
    <property type="match status" value="1"/>
</dbReference>
<dbReference type="HAMAP" id="MF_01227">
    <property type="entry name" value="PyrG"/>
    <property type="match status" value="1"/>
</dbReference>
<dbReference type="InterPro" id="IPR029062">
    <property type="entry name" value="Class_I_gatase-like"/>
</dbReference>
<dbReference type="InterPro" id="IPR004468">
    <property type="entry name" value="CTP_synthase"/>
</dbReference>
<dbReference type="InterPro" id="IPR017456">
    <property type="entry name" value="CTP_synthase_N"/>
</dbReference>
<dbReference type="InterPro" id="IPR017926">
    <property type="entry name" value="GATASE"/>
</dbReference>
<dbReference type="InterPro" id="IPR033828">
    <property type="entry name" value="GATase1_CTP_Synthase"/>
</dbReference>
<dbReference type="InterPro" id="IPR027417">
    <property type="entry name" value="P-loop_NTPase"/>
</dbReference>
<dbReference type="NCBIfam" id="NF003792">
    <property type="entry name" value="PRK05380.1"/>
    <property type="match status" value="1"/>
</dbReference>
<dbReference type="NCBIfam" id="TIGR00337">
    <property type="entry name" value="PyrG"/>
    <property type="match status" value="1"/>
</dbReference>
<dbReference type="PANTHER" id="PTHR11550">
    <property type="entry name" value="CTP SYNTHASE"/>
    <property type="match status" value="1"/>
</dbReference>
<dbReference type="PANTHER" id="PTHR11550:SF0">
    <property type="entry name" value="CTP SYNTHASE-RELATED"/>
    <property type="match status" value="1"/>
</dbReference>
<dbReference type="Pfam" id="PF06418">
    <property type="entry name" value="CTP_synth_N"/>
    <property type="match status" value="1"/>
</dbReference>
<dbReference type="Pfam" id="PF00117">
    <property type="entry name" value="GATase"/>
    <property type="match status" value="1"/>
</dbReference>
<dbReference type="SUPFAM" id="SSF52317">
    <property type="entry name" value="Class I glutamine amidotransferase-like"/>
    <property type="match status" value="1"/>
</dbReference>
<dbReference type="SUPFAM" id="SSF52540">
    <property type="entry name" value="P-loop containing nucleoside triphosphate hydrolases"/>
    <property type="match status" value="1"/>
</dbReference>
<dbReference type="PROSITE" id="PS51273">
    <property type="entry name" value="GATASE_TYPE_1"/>
    <property type="match status" value="1"/>
</dbReference>
<keyword id="KW-0067">ATP-binding</keyword>
<keyword id="KW-0315">Glutamine amidotransferase</keyword>
<keyword id="KW-0436">Ligase</keyword>
<keyword id="KW-0460">Magnesium</keyword>
<keyword id="KW-0479">Metal-binding</keyword>
<keyword id="KW-0547">Nucleotide-binding</keyword>
<keyword id="KW-0665">Pyrimidine biosynthesis</keyword>
<keyword id="KW-1185">Reference proteome</keyword>
<organism>
    <name type="scientific">Mycoplasmopsis pulmonis (strain UAB CTIP)</name>
    <name type="common">Mycoplasma pulmonis</name>
    <dbReference type="NCBI Taxonomy" id="272635"/>
    <lineage>
        <taxon>Bacteria</taxon>
        <taxon>Bacillati</taxon>
        <taxon>Mycoplasmatota</taxon>
        <taxon>Mycoplasmoidales</taxon>
        <taxon>Metamycoplasmataceae</taxon>
        <taxon>Mycoplasmopsis</taxon>
    </lineage>
</organism>
<accession>Q98PQ3</accession>
<reference key="1">
    <citation type="journal article" date="2001" name="Nucleic Acids Res.">
        <title>The complete genome sequence of the murine respiratory pathogen Mycoplasma pulmonis.</title>
        <authorList>
            <person name="Chambaud I."/>
            <person name="Heilig R."/>
            <person name="Ferris S."/>
            <person name="Barbe V."/>
            <person name="Samson D."/>
            <person name="Galisson F."/>
            <person name="Moszer I."/>
            <person name="Dybvig K."/>
            <person name="Wroblewski H."/>
            <person name="Viari A."/>
            <person name="Rocha E.P.C."/>
            <person name="Blanchard A."/>
        </authorList>
    </citation>
    <scope>NUCLEOTIDE SEQUENCE [LARGE SCALE GENOMIC DNA]</scope>
    <source>
        <strain>UAB CTIP</strain>
    </source>
</reference>
<sequence length="539" mass="61377">MTLRSKMTKYIFVTGGVVSGLGKGVSAASIGNLLKHRGFKIFVLKLDPYLNIDPGVMSPYEHGEVYVTADGGETDLDLGHYERFIDVELSKDSNYTSGKIFSNLFTQERNGNFLGKTVQLIPHFTNEILNTIEKIATKHKPDFMIVEIGGTIGDIESNSFIYAMAELALAKPDRFFLVHVTYVIFLEASNEFKSKPTQVSINSLRSFGISPNLVLLRNSKMVPDNIVEKIAKKSVLNKDYVISVPDMKNIYEAPLYFESQNIAQIILSHFKIKDIEPDLSKWNKLVDSIKKPKAYKAKILMVGKYVEFLDAYKSIIEAFKVSSYEENIDLKMDWVDSSKLELTNLDEFLKGYDGVVILPGFGIRGWEQKVRIAQYTRENKIPTFGICLGFQAMSVAHARMKGIKNANSREFANDKNDETYILDLIQGKAKDKNLGGTLRLGNYTTTIKENTLAKKIYQKDQVIERHRHRYEINSKYIDLLEDEEFVFSGIWNEGKLAEICEVKNHPFYLGVQYHPEFTSRPLKPNPLFTSFLRVLIKNN</sequence>
<feature type="chain" id="PRO_0000138204" description="CTP synthase">
    <location>
        <begin position="1"/>
        <end position="539"/>
    </location>
</feature>
<feature type="domain" description="Glutamine amidotransferase type-1" evidence="1">
    <location>
        <begin position="298"/>
        <end position="539"/>
    </location>
</feature>
<feature type="region of interest" description="Amidoligase domain" evidence="1">
    <location>
        <begin position="1"/>
        <end position="272"/>
    </location>
</feature>
<feature type="active site" description="Nucleophile; for glutamine hydrolysis" evidence="1">
    <location>
        <position position="387"/>
    </location>
</feature>
<feature type="active site" evidence="1">
    <location>
        <position position="514"/>
    </location>
</feature>
<feature type="active site" evidence="1">
    <location>
        <position position="516"/>
    </location>
</feature>
<feature type="binding site" evidence="1">
    <location>
        <position position="19"/>
    </location>
    <ligand>
        <name>CTP</name>
        <dbReference type="ChEBI" id="CHEBI:37563"/>
        <note>allosteric inhibitor</note>
    </ligand>
</feature>
<feature type="binding site" evidence="1">
    <location>
        <position position="19"/>
    </location>
    <ligand>
        <name>UTP</name>
        <dbReference type="ChEBI" id="CHEBI:46398"/>
    </ligand>
</feature>
<feature type="binding site" evidence="1">
    <location>
        <begin position="20"/>
        <end position="25"/>
    </location>
    <ligand>
        <name>ATP</name>
        <dbReference type="ChEBI" id="CHEBI:30616"/>
    </ligand>
</feature>
<feature type="binding site" evidence="1">
    <location>
        <position position="60"/>
    </location>
    <ligand>
        <name>L-glutamine</name>
        <dbReference type="ChEBI" id="CHEBI:58359"/>
    </ligand>
</feature>
<feature type="binding site" evidence="1">
    <location>
        <position position="77"/>
    </location>
    <ligand>
        <name>ATP</name>
        <dbReference type="ChEBI" id="CHEBI:30616"/>
    </ligand>
</feature>
<feature type="binding site" evidence="1">
    <location>
        <position position="77"/>
    </location>
    <ligand>
        <name>Mg(2+)</name>
        <dbReference type="ChEBI" id="CHEBI:18420"/>
    </ligand>
</feature>
<feature type="binding site" evidence="1">
    <location>
        <position position="147"/>
    </location>
    <ligand>
        <name>Mg(2+)</name>
        <dbReference type="ChEBI" id="CHEBI:18420"/>
    </ligand>
</feature>
<feature type="binding site" evidence="1">
    <location>
        <begin position="154"/>
        <end position="156"/>
    </location>
    <ligand>
        <name>CTP</name>
        <dbReference type="ChEBI" id="CHEBI:37563"/>
        <note>allosteric inhibitor</note>
    </ligand>
</feature>
<feature type="binding site" evidence="1">
    <location>
        <begin position="193"/>
        <end position="198"/>
    </location>
    <ligand>
        <name>CTP</name>
        <dbReference type="ChEBI" id="CHEBI:37563"/>
        <note>allosteric inhibitor</note>
    </ligand>
</feature>
<feature type="binding site" evidence="1">
    <location>
        <begin position="193"/>
        <end position="198"/>
    </location>
    <ligand>
        <name>UTP</name>
        <dbReference type="ChEBI" id="CHEBI:46398"/>
    </ligand>
</feature>
<feature type="binding site" evidence="1">
    <location>
        <position position="229"/>
    </location>
    <ligand>
        <name>CTP</name>
        <dbReference type="ChEBI" id="CHEBI:37563"/>
        <note>allosteric inhibitor</note>
    </ligand>
</feature>
<feature type="binding site" evidence="1">
    <location>
        <position position="229"/>
    </location>
    <ligand>
        <name>UTP</name>
        <dbReference type="ChEBI" id="CHEBI:46398"/>
    </ligand>
</feature>
<feature type="binding site" evidence="1">
    <location>
        <position position="360"/>
    </location>
    <ligand>
        <name>L-glutamine</name>
        <dbReference type="ChEBI" id="CHEBI:58359"/>
    </ligand>
</feature>
<feature type="binding site" evidence="1">
    <location>
        <begin position="388"/>
        <end position="391"/>
    </location>
    <ligand>
        <name>L-glutamine</name>
        <dbReference type="ChEBI" id="CHEBI:58359"/>
    </ligand>
</feature>
<feature type="binding site" evidence="1">
    <location>
        <position position="410"/>
    </location>
    <ligand>
        <name>L-glutamine</name>
        <dbReference type="ChEBI" id="CHEBI:58359"/>
    </ligand>
</feature>
<feature type="binding site" evidence="1">
    <location>
        <position position="469"/>
    </location>
    <ligand>
        <name>L-glutamine</name>
        <dbReference type="ChEBI" id="CHEBI:58359"/>
    </ligand>
</feature>